<accession>Q9X054</accession>
<sequence>MKKVGILNSEISKIVADMGHMDTLAVVDLGFPIPQGVKKVDLVVDRGKPGLMEVIEILLRELKVERIILAKEMDEKSIQTKQELLKLIEKMNGPVEVVTVPHKEFKEMSKNVKGIIRTGADIPYSNVILVGGVIF</sequence>
<comment type="function">
    <text evidence="1">Catalyzes the interconversion of beta-pyran and beta-furan forms of D-ribose.</text>
</comment>
<comment type="catalytic activity">
    <reaction evidence="1">
        <text>beta-D-ribopyranose = beta-D-ribofuranose</text>
        <dbReference type="Rhea" id="RHEA:25432"/>
        <dbReference type="ChEBI" id="CHEBI:27476"/>
        <dbReference type="ChEBI" id="CHEBI:47002"/>
        <dbReference type="EC" id="5.4.99.62"/>
    </reaction>
</comment>
<comment type="pathway">
    <text evidence="1">Carbohydrate metabolism; D-ribose degradation; D-ribose 5-phosphate from beta-D-ribopyranose: step 1/2.</text>
</comment>
<comment type="subunit">
    <text evidence="1">Homodecamer.</text>
</comment>
<comment type="subcellular location">
    <subcellularLocation>
        <location evidence="1">Cytoplasm</location>
    </subcellularLocation>
</comment>
<comment type="similarity">
    <text evidence="1">Belongs to the RbsD / FucU family. RbsD subfamily.</text>
</comment>
<evidence type="ECO:0000255" key="1">
    <source>
        <dbReference type="HAMAP-Rule" id="MF_01661"/>
    </source>
</evidence>
<proteinExistence type="inferred from homology"/>
<gene>
    <name evidence="1" type="primary">rbsD</name>
    <name type="ordered locus">TM_0959</name>
</gene>
<protein>
    <recommendedName>
        <fullName evidence="1">D-ribose pyranase</fullName>
        <ecNumber evidence="1">5.4.99.62</ecNumber>
    </recommendedName>
</protein>
<feature type="chain" id="PRO_0000346291" description="D-ribose pyranase">
    <location>
        <begin position="1"/>
        <end position="135"/>
    </location>
</feature>
<feature type="active site" description="Proton donor" evidence="1">
    <location>
        <position position="20"/>
    </location>
</feature>
<feature type="binding site" evidence="1">
    <location>
        <position position="28"/>
    </location>
    <ligand>
        <name>substrate</name>
    </ligand>
</feature>
<feature type="binding site" evidence="1">
    <location>
        <position position="102"/>
    </location>
    <ligand>
        <name>substrate</name>
    </ligand>
</feature>
<feature type="binding site" evidence="1">
    <location>
        <begin position="124"/>
        <end position="126"/>
    </location>
    <ligand>
        <name>substrate</name>
    </ligand>
</feature>
<dbReference type="EC" id="5.4.99.62" evidence="1"/>
<dbReference type="EMBL" id="AE000512">
    <property type="protein sequence ID" value="AAD36038.1"/>
    <property type="molecule type" value="Genomic_DNA"/>
</dbReference>
<dbReference type="PIR" id="D72311">
    <property type="entry name" value="D72311"/>
</dbReference>
<dbReference type="RefSeq" id="NP_228767.1">
    <property type="nucleotide sequence ID" value="NC_000853.1"/>
</dbReference>
<dbReference type="RefSeq" id="WP_004080603.1">
    <property type="nucleotide sequence ID" value="NZ_CP011107.1"/>
</dbReference>
<dbReference type="SMR" id="Q9X054"/>
<dbReference type="FunCoup" id="Q9X054">
    <property type="interactions" value="78"/>
</dbReference>
<dbReference type="STRING" id="243274.TM_0959"/>
<dbReference type="PaxDb" id="243274-THEMA_09550"/>
<dbReference type="EnsemblBacteria" id="AAD36038">
    <property type="protein sequence ID" value="AAD36038"/>
    <property type="gene ID" value="TM_0959"/>
</dbReference>
<dbReference type="KEGG" id="tma:TM0959"/>
<dbReference type="KEGG" id="tmi:THEMA_09550"/>
<dbReference type="KEGG" id="tmm:Tmari_0961"/>
<dbReference type="KEGG" id="tmw:THMA_0982"/>
<dbReference type="eggNOG" id="COG1869">
    <property type="taxonomic scope" value="Bacteria"/>
</dbReference>
<dbReference type="InParanoid" id="Q9X054"/>
<dbReference type="OrthoDB" id="9805009at2"/>
<dbReference type="UniPathway" id="UPA00916">
    <property type="reaction ID" value="UER00888"/>
</dbReference>
<dbReference type="Proteomes" id="UP000008183">
    <property type="component" value="Chromosome"/>
</dbReference>
<dbReference type="GO" id="GO:0005737">
    <property type="term" value="C:cytoplasm"/>
    <property type="evidence" value="ECO:0007669"/>
    <property type="project" value="UniProtKB-SubCell"/>
</dbReference>
<dbReference type="GO" id="GO:0062193">
    <property type="term" value="F:D-ribose pyranase activity"/>
    <property type="evidence" value="ECO:0007669"/>
    <property type="project" value="UniProtKB-EC"/>
</dbReference>
<dbReference type="GO" id="GO:0042806">
    <property type="term" value="F:fucose binding"/>
    <property type="evidence" value="ECO:0000318"/>
    <property type="project" value="GO_Central"/>
</dbReference>
<dbReference type="GO" id="GO:0016872">
    <property type="term" value="F:intramolecular lyase activity"/>
    <property type="evidence" value="ECO:0007669"/>
    <property type="project" value="UniProtKB-UniRule"/>
</dbReference>
<dbReference type="GO" id="GO:0016857">
    <property type="term" value="F:racemase and epimerase activity, acting on carbohydrates and derivatives"/>
    <property type="evidence" value="ECO:0000318"/>
    <property type="project" value="GO_Central"/>
</dbReference>
<dbReference type="GO" id="GO:0019303">
    <property type="term" value="P:D-ribose catabolic process"/>
    <property type="evidence" value="ECO:0007669"/>
    <property type="project" value="UniProtKB-UniRule"/>
</dbReference>
<dbReference type="GO" id="GO:0006004">
    <property type="term" value="P:fucose metabolic process"/>
    <property type="evidence" value="ECO:0000318"/>
    <property type="project" value="GO_Central"/>
</dbReference>
<dbReference type="GO" id="GO:0036065">
    <property type="term" value="P:fucosylation"/>
    <property type="evidence" value="ECO:0000318"/>
    <property type="project" value="GO_Central"/>
</dbReference>
<dbReference type="FunFam" id="3.40.1650.10:FF:000004">
    <property type="entry name" value="D-ribose pyranase"/>
    <property type="match status" value="1"/>
</dbReference>
<dbReference type="Gene3D" id="3.40.1650.10">
    <property type="entry name" value="RbsD-like domain"/>
    <property type="match status" value="1"/>
</dbReference>
<dbReference type="HAMAP" id="MF_01661">
    <property type="entry name" value="D_rib_pyranase"/>
    <property type="match status" value="1"/>
</dbReference>
<dbReference type="InterPro" id="IPR023064">
    <property type="entry name" value="D-ribose_pyranase"/>
</dbReference>
<dbReference type="InterPro" id="IPR023750">
    <property type="entry name" value="RbsD-like_sf"/>
</dbReference>
<dbReference type="InterPro" id="IPR007721">
    <property type="entry name" value="RbsD_FucU"/>
</dbReference>
<dbReference type="NCBIfam" id="NF008761">
    <property type="entry name" value="PRK11797.1"/>
    <property type="match status" value="1"/>
</dbReference>
<dbReference type="PANTHER" id="PTHR37831">
    <property type="entry name" value="D-RIBOSE PYRANASE"/>
    <property type="match status" value="1"/>
</dbReference>
<dbReference type="PANTHER" id="PTHR37831:SF1">
    <property type="entry name" value="D-RIBOSE PYRANASE"/>
    <property type="match status" value="1"/>
</dbReference>
<dbReference type="Pfam" id="PF05025">
    <property type="entry name" value="RbsD_FucU"/>
    <property type="match status" value="1"/>
</dbReference>
<dbReference type="SUPFAM" id="SSF102546">
    <property type="entry name" value="RbsD-like"/>
    <property type="match status" value="1"/>
</dbReference>
<name>RBSD_THEMA</name>
<reference key="1">
    <citation type="journal article" date="1999" name="Nature">
        <title>Evidence for lateral gene transfer between Archaea and Bacteria from genome sequence of Thermotoga maritima.</title>
        <authorList>
            <person name="Nelson K.E."/>
            <person name="Clayton R.A."/>
            <person name="Gill S.R."/>
            <person name="Gwinn M.L."/>
            <person name="Dodson R.J."/>
            <person name="Haft D.H."/>
            <person name="Hickey E.K."/>
            <person name="Peterson J.D."/>
            <person name="Nelson W.C."/>
            <person name="Ketchum K.A."/>
            <person name="McDonald L.A."/>
            <person name="Utterback T.R."/>
            <person name="Malek J.A."/>
            <person name="Linher K.D."/>
            <person name="Garrett M.M."/>
            <person name="Stewart A.M."/>
            <person name="Cotton M.D."/>
            <person name="Pratt M.S."/>
            <person name="Phillips C.A."/>
            <person name="Richardson D.L."/>
            <person name="Heidelberg J.F."/>
            <person name="Sutton G.G."/>
            <person name="Fleischmann R.D."/>
            <person name="Eisen J.A."/>
            <person name="White O."/>
            <person name="Salzberg S.L."/>
            <person name="Smith H.O."/>
            <person name="Venter J.C."/>
            <person name="Fraser C.M."/>
        </authorList>
    </citation>
    <scope>NUCLEOTIDE SEQUENCE [LARGE SCALE GENOMIC DNA]</scope>
    <source>
        <strain>ATCC 43589 / DSM 3109 / JCM 10099 / NBRC 100826 / MSB8</strain>
    </source>
</reference>
<keyword id="KW-0119">Carbohydrate metabolism</keyword>
<keyword id="KW-0963">Cytoplasm</keyword>
<keyword id="KW-0413">Isomerase</keyword>
<keyword id="KW-1185">Reference proteome</keyword>
<organism>
    <name type="scientific">Thermotoga maritima (strain ATCC 43589 / DSM 3109 / JCM 10099 / NBRC 100826 / MSB8)</name>
    <dbReference type="NCBI Taxonomy" id="243274"/>
    <lineage>
        <taxon>Bacteria</taxon>
        <taxon>Thermotogati</taxon>
        <taxon>Thermotogota</taxon>
        <taxon>Thermotogae</taxon>
        <taxon>Thermotogales</taxon>
        <taxon>Thermotogaceae</taxon>
        <taxon>Thermotoga</taxon>
    </lineage>
</organism>